<feature type="chain" id="PRO_0000450497" description="Cytochrome P450 monooxygenase oryQ">
    <location>
        <begin position="1"/>
        <end position="170"/>
    </location>
</feature>
<feature type="binding site" description="axial binding residue" evidence="1">
    <location>
        <position position="85"/>
    </location>
    <ligand>
        <name>heme</name>
        <dbReference type="ChEBI" id="CHEBI:30413"/>
    </ligand>
    <ligandPart>
        <name>Fe</name>
        <dbReference type="ChEBI" id="CHEBI:18248"/>
    </ligandPart>
</feature>
<keyword id="KW-0349">Heme</keyword>
<keyword id="KW-0408">Iron</keyword>
<keyword id="KW-0479">Metal-binding</keyword>
<keyword id="KW-0503">Monooxygenase</keyword>
<keyword id="KW-0560">Oxidoreductase</keyword>
<keyword id="KW-1185">Reference proteome</keyword>
<comment type="function">
    <text evidence="2 5">Cytochrome P450 monooxygenase; part of the gene cluster that mediates the biosynthesis of oryzines, natural products with an unusual maleidride backbone (PubMed:30104550). The two subunits of the fungal fatty acid synthase oryfasA and oryfasB probably form octenoic acid (Probable). This fatty acid is most likely activated by the acyl-CoA ligase oryP to give octenyl-CoA before the citrate synthase-like protein oryE catalyzes condensation with oxaloacetate to form tricarboxylic acid (Probable). The next steps of the pathways are conjectural, but a favorite possible route has been proposed, beginning with decarboxylation and concomitant dehydration by the decarboxylase oryM, followed by tautomerization, which may lead to the production of a diene intermediate (Probable). Reduction of this diene intermediate could give the known metabolite piliformic acid (Probable). On the pathway to oryzine B and oryzine A, however, hydroxylation of the diene by the alpha-ketoglutarate-dependent dioxygenase oryG and lactonisation by the lactonohydrolases oryH or oryL could give oryzine B directly (Probable). Finally, enoyl reduction by the dehydrogenase oryD would then convert oryzine B into oryzine A (Probable).</text>
</comment>
<comment type="cofactor">
    <cofactor evidence="1">
        <name>heme</name>
        <dbReference type="ChEBI" id="CHEBI:30413"/>
    </cofactor>
</comment>
<comment type="pathway">
    <text evidence="5">Secondary metabolite biosynthesis.</text>
</comment>
<comment type="similarity">
    <text evidence="4">Belongs to the cytochrome P450 family.</text>
</comment>
<name>ORYQ_ASPOR</name>
<dbReference type="EC" id="1.-.-.-" evidence="5"/>
<dbReference type="EMBL" id="AP007175">
    <property type="status" value="NOT_ANNOTATED_CDS"/>
    <property type="molecule type" value="Genomic_DNA"/>
</dbReference>
<dbReference type="SMR" id="P9WEY9"/>
<dbReference type="Proteomes" id="UP000006564">
    <property type="component" value="Chromosome 8"/>
</dbReference>
<dbReference type="GO" id="GO:0020037">
    <property type="term" value="F:heme binding"/>
    <property type="evidence" value="ECO:0007669"/>
    <property type="project" value="InterPro"/>
</dbReference>
<dbReference type="GO" id="GO:0005506">
    <property type="term" value="F:iron ion binding"/>
    <property type="evidence" value="ECO:0007669"/>
    <property type="project" value="InterPro"/>
</dbReference>
<dbReference type="GO" id="GO:0004497">
    <property type="term" value="F:monooxygenase activity"/>
    <property type="evidence" value="ECO:0007669"/>
    <property type="project" value="UniProtKB-KW"/>
</dbReference>
<dbReference type="GO" id="GO:0016705">
    <property type="term" value="F:oxidoreductase activity, acting on paired donors, with incorporation or reduction of molecular oxygen"/>
    <property type="evidence" value="ECO:0007669"/>
    <property type="project" value="InterPro"/>
</dbReference>
<dbReference type="Gene3D" id="1.10.630.10">
    <property type="entry name" value="Cytochrome P450"/>
    <property type="match status" value="1"/>
</dbReference>
<dbReference type="InterPro" id="IPR001128">
    <property type="entry name" value="Cyt_P450"/>
</dbReference>
<dbReference type="InterPro" id="IPR017972">
    <property type="entry name" value="Cyt_P450_CS"/>
</dbReference>
<dbReference type="InterPro" id="IPR002401">
    <property type="entry name" value="Cyt_P450_E_grp-I"/>
</dbReference>
<dbReference type="InterPro" id="IPR036396">
    <property type="entry name" value="Cyt_P450_sf"/>
</dbReference>
<dbReference type="InterPro" id="IPR050121">
    <property type="entry name" value="Cytochrome_P450_monoxygenase"/>
</dbReference>
<dbReference type="PANTHER" id="PTHR24305:SF29">
    <property type="entry name" value="BENZOATE-PARA-HYDROXYLASE"/>
    <property type="match status" value="1"/>
</dbReference>
<dbReference type="PANTHER" id="PTHR24305">
    <property type="entry name" value="CYTOCHROME P450"/>
    <property type="match status" value="1"/>
</dbReference>
<dbReference type="Pfam" id="PF00067">
    <property type="entry name" value="p450"/>
    <property type="match status" value="1"/>
</dbReference>
<dbReference type="PRINTS" id="PR00463">
    <property type="entry name" value="EP450I"/>
</dbReference>
<dbReference type="SUPFAM" id="SSF48264">
    <property type="entry name" value="Cytochrome P450"/>
    <property type="match status" value="1"/>
</dbReference>
<dbReference type="PROSITE" id="PS00086">
    <property type="entry name" value="CYTOCHROME_P450"/>
    <property type="match status" value="1"/>
</dbReference>
<evidence type="ECO:0000250" key="1">
    <source>
        <dbReference type="UniProtKB" id="P04798"/>
    </source>
</evidence>
<evidence type="ECO:0000269" key="2">
    <source>
    </source>
</evidence>
<evidence type="ECO:0000303" key="3">
    <source>
    </source>
</evidence>
<evidence type="ECO:0000305" key="4"/>
<evidence type="ECO:0000305" key="5">
    <source>
    </source>
</evidence>
<gene>
    <name evidence="3" type="primary">oryQ</name>
</gene>
<reference key="1">
    <citation type="journal article" date="2005" name="Nature">
        <title>Genome sequencing and analysis of Aspergillus oryzae.</title>
        <authorList>
            <person name="Machida M."/>
            <person name="Asai K."/>
            <person name="Sano M."/>
            <person name="Tanaka T."/>
            <person name="Kumagai T."/>
            <person name="Terai G."/>
            <person name="Kusumoto K."/>
            <person name="Arima T."/>
            <person name="Akita O."/>
            <person name="Kashiwagi Y."/>
            <person name="Abe K."/>
            <person name="Gomi K."/>
            <person name="Horiuchi H."/>
            <person name="Kitamoto K."/>
            <person name="Kobayashi T."/>
            <person name="Takeuchi M."/>
            <person name="Denning D.W."/>
            <person name="Galagan J.E."/>
            <person name="Nierman W.C."/>
            <person name="Yu J."/>
            <person name="Archer D.B."/>
            <person name="Bennett J.W."/>
            <person name="Bhatnagar D."/>
            <person name="Cleveland T.E."/>
            <person name="Fedorova N.D."/>
            <person name="Gotoh O."/>
            <person name="Horikawa H."/>
            <person name="Hosoyama A."/>
            <person name="Ichinomiya M."/>
            <person name="Igarashi R."/>
            <person name="Iwashita K."/>
            <person name="Juvvadi P.R."/>
            <person name="Kato M."/>
            <person name="Kato Y."/>
            <person name="Kin T."/>
            <person name="Kokubun A."/>
            <person name="Maeda H."/>
            <person name="Maeyama N."/>
            <person name="Maruyama J."/>
            <person name="Nagasaki H."/>
            <person name="Nakajima T."/>
            <person name="Oda K."/>
            <person name="Okada K."/>
            <person name="Paulsen I."/>
            <person name="Sakamoto K."/>
            <person name="Sawano T."/>
            <person name="Takahashi M."/>
            <person name="Takase K."/>
            <person name="Terabayashi Y."/>
            <person name="Wortman J.R."/>
            <person name="Yamada O."/>
            <person name="Yamagata Y."/>
            <person name="Anazawa H."/>
            <person name="Hata Y."/>
            <person name="Koide Y."/>
            <person name="Komori T."/>
            <person name="Koyama Y."/>
            <person name="Minetoki T."/>
            <person name="Suharnan S."/>
            <person name="Tanaka A."/>
            <person name="Isono K."/>
            <person name="Kuhara S."/>
            <person name="Ogasawara N."/>
            <person name="Kikuchi H."/>
        </authorList>
    </citation>
    <scope>NUCLEOTIDE SEQUENCE [LARGE SCALE GENOMIC DNA]</scope>
    <source>
        <strain>ATCC 42149 / RIB 40</strain>
    </source>
</reference>
<reference key="2">
    <citation type="journal article" date="2018" name="J. Fungi">
        <title>Oryzines A &amp; B, maleidride congeners from Aspergillus oryzae and their putative biosynthesis.</title>
        <authorList>
            <person name="Wasil Z."/>
            <person name="Kuhnert E."/>
            <person name="Simpson T.J."/>
            <person name="Cox R.J."/>
        </authorList>
    </citation>
    <scope>FUNCTION</scope>
    <scope>PATHWAY</scope>
</reference>
<proteinExistence type="inferred from homology"/>
<sequence>MRLWPAIAISLPRVTPPEGCEIDGSWVPGGTKVGVSQWSAYRSERNFARADQFLPERWLPEGEEESFINDTRAAFQPFSTGPRNCLGMNFARAETRIIFARLLLDFDLELLTGRDEWEAQKVYIIWDRCPLYVRGFGRQTRHKRPANLWLPWDTHGSSASNERKLADLLS</sequence>
<protein>
    <recommendedName>
        <fullName evidence="3">Cytochrome P450 monooxygenase oryQ</fullName>
        <ecNumber evidence="5">1.-.-.-</ecNumber>
    </recommendedName>
    <alternativeName>
        <fullName evidence="3">Oryzines biosynthesis cluster protein Q</fullName>
    </alternativeName>
</protein>
<organism>
    <name type="scientific">Aspergillus oryzae (strain ATCC 42149 / RIB 40)</name>
    <name type="common">Yellow koji mold</name>
    <dbReference type="NCBI Taxonomy" id="510516"/>
    <lineage>
        <taxon>Eukaryota</taxon>
        <taxon>Fungi</taxon>
        <taxon>Dikarya</taxon>
        <taxon>Ascomycota</taxon>
        <taxon>Pezizomycotina</taxon>
        <taxon>Eurotiomycetes</taxon>
        <taxon>Eurotiomycetidae</taxon>
        <taxon>Eurotiales</taxon>
        <taxon>Aspergillaceae</taxon>
        <taxon>Aspergillus</taxon>
        <taxon>Aspergillus subgen. Circumdati</taxon>
    </lineage>
</organism>
<accession>P9WEY9</accession>